<comment type="function">
    <text evidence="2">Guanine nucleotide-binding proteins (G proteins) function as transducers downstream of G protein-coupled receptors (GPCRs) in numerous signaling cascades. The alpha chain contains the guanine nucleotide binding site and alternates between an active, GTP-bound state and an inactive, GDP-bound state. Signaling by an activated GPCR promotes GDP release and GTP binding. The alpha subunit has a low GTPase activity that converts bound GTP to GDP, thereby terminating the signal. Both GDP release and GTP hydrolysis are modulated by numerous regulatory proteins. Signaling is mediated via effector proteins, such as adenylate cyclase. Inhibits adenylate cyclase activity, leading to decreased intracellular cAMP levels.</text>
</comment>
<comment type="catalytic activity">
    <reaction evidence="2">
        <text>GTP + H2O = GDP + phosphate + H(+)</text>
        <dbReference type="Rhea" id="RHEA:19669"/>
        <dbReference type="ChEBI" id="CHEBI:15377"/>
        <dbReference type="ChEBI" id="CHEBI:15378"/>
        <dbReference type="ChEBI" id="CHEBI:37565"/>
        <dbReference type="ChEBI" id="CHEBI:43474"/>
        <dbReference type="ChEBI" id="CHEBI:58189"/>
    </reaction>
    <physiologicalReaction direction="left-to-right" evidence="2">
        <dbReference type="Rhea" id="RHEA:19670"/>
    </physiologicalReaction>
</comment>
<comment type="subunit">
    <text evidence="2">G proteins are composed of 3 units; alpha, beta and gamma.</text>
</comment>
<comment type="similarity">
    <text evidence="5">Belongs to the G-alpha family. G(i/o/t/z) subfamily.</text>
</comment>
<protein>
    <recommendedName>
        <fullName>Guanine nucleotide-binding protein G(o) subunit alpha</fullName>
        <ecNumber evidence="2">3.6.5.-</ecNumber>
    </recommendedName>
</protein>
<reference key="1">
    <citation type="journal article" date="1989" name="FEBS Lett.">
        <title>Molecular cloning and sequence determination of a cDNA coding for the alpha-subunit of a Go-type protein of Xenopus laevis oocytes.</title>
        <authorList>
            <person name="Olate J."/>
            <person name="Jorquera H."/>
            <person name="Purcell P."/>
            <person name="Codina J."/>
            <person name="Birnbaumer L."/>
            <person name="Allende J.E."/>
        </authorList>
    </citation>
    <scope>NUCLEOTIDE SEQUENCE [MRNA]</scope>
    <source>
        <tissue>Oocyte</tissue>
    </source>
</reference>
<reference key="2">
    <citation type="journal article" date="1990" name="FEBS Lett.">
        <authorList>
            <person name="Olate J."/>
            <person name="Jorquera H."/>
            <person name="Purcell P."/>
            <person name="Codina J."/>
            <person name="Birnbaumer L."/>
            <person name="Allende J.E."/>
        </authorList>
    </citation>
    <scope>ERRATUM OF PUBMED:2494063</scope>
    <scope>SEQUENCE REVISION</scope>
</reference>
<keyword id="KW-0342">GTP-binding</keyword>
<keyword id="KW-0378">Hydrolase</keyword>
<keyword id="KW-0449">Lipoprotein</keyword>
<keyword id="KW-0460">Magnesium</keyword>
<keyword id="KW-0479">Metal-binding</keyword>
<keyword id="KW-0519">Myristate</keyword>
<keyword id="KW-0547">Nucleotide-binding</keyword>
<keyword id="KW-0564">Palmitate</keyword>
<keyword id="KW-1185">Reference proteome</keyword>
<keyword id="KW-0807">Transducer</keyword>
<accession>P10825</accession>
<sequence length="354" mass="40464">MGCTLSAEERAALERSKQIEKNLKEDGVTAAKDVKLLLLGAGESGKSTIVKQMKIIHEDGFSGEDVKQYKPVVYSNTIQSLAAIVRAMDTLGIEYGDKERRADAKMVCDVVSRMEDTEPYSPELLSAMVRLWADSGIQECFNRSREYQLNDSAKYYLDSLDRIGAPDYQPTEQDILRTRVKTTGIVETHFTFKNLHFRLFDVGGQRSERKKWWHCFEDVTAIIFCVALTGYDQVLHEDETTNRMHESLKLFDSICNNKWFTDTSIILFLNKKDIFQEKIKSSPLTICFPEYTGPNSFTEAVAHTQHQYESRNKSENKEIYTHITCATDTQNIQFVFDAVTDVIIAYNLRGCGLY</sequence>
<name>GNAO_XENLA</name>
<gene>
    <name type="primary">gna0</name>
</gene>
<organism>
    <name type="scientific">Xenopus laevis</name>
    <name type="common">African clawed frog</name>
    <dbReference type="NCBI Taxonomy" id="8355"/>
    <lineage>
        <taxon>Eukaryota</taxon>
        <taxon>Metazoa</taxon>
        <taxon>Chordata</taxon>
        <taxon>Craniata</taxon>
        <taxon>Vertebrata</taxon>
        <taxon>Euteleostomi</taxon>
        <taxon>Amphibia</taxon>
        <taxon>Batrachia</taxon>
        <taxon>Anura</taxon>
        <taxon>Pipoidea</taxon>
        <taxon>Pipidae</taxon>
        <taxon>Xenopodinae</taxon>
        <taxon>Xenopus</taxon>
        <taxon>Xenopus</taxon>
    </lineage>
</organism>
<evidence type="ECO:0000250" key="1"/>
<evidence type="ECO:0000250" key="2">
    <source>
        <dbReference type="UniProtKB" id="P18872"/>
    </source>
</evidence>
<evidence type="ECO:0000255" key="3"/>
<evidence type="ECO:0000255" key="4">
    <source>
        <dbReference type="PROSITE-ProRule" id="PRU01230"/>
    </source>
</evidence>
<evidence type="ECO:0000305" key="5"/>
<feature type="initiator methionine" description="Removed" evidence="1">
    <location>
        <position position="1"/>
    </location>
</feature>
<feature type="chain" id="PRO_0000203708" description="Guanine nucleotide-binding protein G(o) subunit alpha">
    <location>
        <begin position="2"/>
        <end position="354"/>
    </location>
</feature>
<feature type="domain" description="G-alpha" evidence="4">
    <location>
        <begin position="32"/>
        <end position="354"/>
    </location>
</feature>
<feature type="region of interest" description="G1 motif" evidence="4">
    <location>
        <begin position="35"/>
        <end position="48"/>
    </location>
</feature>
<feature type="region of interest" description="G2 motif" evidence="4">
    <location>
        <begin position="174"/>
        <end position="182"/>
    </location>
</feature>
<feature type="region of interest" description="G3 motif" evidence="4">
    <location>
        <begin position="197"/>
        <end position="206"/>
    </location>
</feature>
<feature type="region of interest" description="G4 motif" evidence="4">
    <location>
        <begin position="266"/>
        <end position="273"/>
    </location>
</feature>
<feature type="region of interest" description="G5 motif" evidence="4">
    <location>
        <begin position="324"/>
        <end position="329"/>
    </location>
</feature>
<feature type="binding site" evidence="2">
    <location>
        <position position="43"/>
    </location>
    <ligand>
        <name>GTP</name>
        <dbReference type="ChEBI" id="CHEBI:37565"/>
    </ligand>
</feature>
<feature type="binding site" evidence="2">
    <location>
        <position position="46"/>
    </location>
    <ligand>
        <name>GTP</name>
        <dbReference type="ChEBI" id="CHEBI:37565"/>
    </ligand>
</feature>
<feature type="binding site" evidence="2">
    <location>
        <position position="47"/>
    </location>
    <ligand>
        <name>GTP</name>
        <dbReference type="ChEBI" id="CHEBI:37565"/>
    </ligand>
</feature>
<feature type="binding site" evidence="2">
    <location>
        <position position="47"/>
    </location>
    <ligand>
        <name>Mg(2+)</name>
        <dbReference type="ChEBI" id="CHEBI:18420"/>
    </ligand>
</feature>
<feature type="binding site" evidence="2">
    <location>
        <position position="48"/>
    </location>
    <ligand>
        <name>GTP</name>
        <dbReference type="ChEBI" id="CHEBI:37565"/>
    </ligand>
</feature>
<feature type="binding site" evidence="2">
    <location>
        <position position="152"/>
    </location>
    <ligand>
        <name>GTP</name>
        <dbReference type="ChEBI" id="CHEBI:37565"/>
    </ligand>
</feature>
<feature type="binding site" evidence="2">
    <location>
        <position position="176"/>
    </location>
    <ligand>
        <name>GTP</name>
        <dbReference type="ChEBI" id="CHEBI:37565"/>
    </ligand>
</feature>
<feature type="binding site" evidence="2">
    <location>
        <position position="177"/>
    </location>
    <ligand>
        <name>GTP</name>
        <dbReference type="ChEBI" id="CHEBI:37565"/>
    </ligand>
</feature>
<feature type="binding site" evidence="2">
    <location>
        <position position="178"/>
    </location>
    <ligand>
        <name>GTP</name>
        <dbReference type="ChEBI" id="CHEBI:37565"/>
    </ligand>
</feature>
<feature type="binding site" evidence="2">
    <location>
        <position position="179"/>
    </location>
    <ligand>
        <name>GTP</name>
        <dbReference type="ChEBI" id="CHEBI:37565"/>
    </ligand>
</feature>
<feature type="binding site" evidence="2">
    <location>
        <position position="182"/>
    </location>
    <ligand>
        <name>Mg(2+)</name>
        <dbReference type="ChEBI" id="CHEBI:18420"/>
    </ligand>
</feature>
<feature type="binding site" evidence="2">
    <location>
        <position position="270"/>
    </location>
    <ligand>
        <name>GTP</name>
        <dbReference type="ChEBI" id="CHEBI:37565"/>
    </ligand>
</feature>
<feature type="binding site" evidence="2">
    <location>
        <position position="273"/>
    </location>
    <ligand>
        <name>GTP</name>
        <dbReference type="ChEBI" id="CHEBI:37565"/>
    </ligand>
</feature>
<feature type="binding site" evidence="2">
    <location>
        <position position="325"/>
    </location>
    <ligand>
        <name>GTP</name>
        <dbReference type="ChEBI" id="CHEBI:37565"/>
    </ligand>
</feature>
<feature type="lipid moiety-binding region" description="N-myristoyl glycine" evidence="3">
    <location>
        <position position="2"/>
    </location>
</feature>
<feature type="lipid moiety-binding region" description="S-palmitoyl cysteine" evidence="3">
    <location>
        <position position="3"/>
    </location>
</feature>
<dbReference type="EC" id="3.6.5.-" evidence="2"/>
<dbReference type="EMBL" id="X14636">
    <property type="protein sequence ID" value="CAA32784.1"/>
    <property type="molecule type" value="mRNA"/>
</dbReference>
<dbReference type="PIR" id="S02785">
    <property type="entry name" value="RGXLOA"/>
</dbReference>
<dbReference type="RefSeq" id="NP_001081529.1">
    <property type="nucleotide sequence ID" value="NM_001088060.1"/>
</dbReference>
<dbReference type="SMR" id="P10825"/>
<dbReference type="GeneID" id="397896"/>
<dbReference type="KEGG" id="xla:397896"/>
<dbReference type="AGR" id="Xenbase:XB-GENE-17340914"/>
<dbReference type="CTD" id="397896"/>
<dbReference type="Xenbase" id="XB-GENE-17340914">
    <property type="gene designation" value="gnao1.S"/>
</dbReference>
<dbReference type="OrthoDB" id="5817230at2759"/>
<dbReference type="Proteomes" id="UP000186698">
    <property type="component" value="Chromosome 4S"/>
</dbReference>
<dbReference type="Bgee" id="397896">
    <property type="expression patterns" value="Expressed in brain and 19 other cell types or tissues"/>
</dbReference>
<dbReference type="GO" id="GO:0005737">
    <property type="term" value="C:cytoplasm"/>
    <property type="evidence" value="ECO:0000318"/>
    <property type="project" value="GO_Central"/>
</dbReference>
<dbReference type="GO" id="GO:0005834">
    <property type="term" value="C:heterotrimeric G-protein complex"/>
    <property type="evidence" value="ECO:0000318"/>
    <property type="project" value="GO_Central"/>
</dbReference>
<dbReference type="GO" id="GO:0051430">
    <property type="term" value="F:corticotropin-releasing hormone receptor 1 binding"/>
    <property type="evidence" value="ECO:0000318"/>
    <property type="project" value="GO_Central"/>
</dbReference>
<dbReference type="GO" id="GO:0031821">
    <property type="term" value="F:G protein-coupled serotonin receptor binding"/>
    <property type="evidence" value="ECO:0000318"/>
    <property type="project" value="GO_Central"/>
</dbReference>
<dbReference type="GO" id="GO:0031683">
    <property type="term" value="F:G-protein beta/gamma-subunit complex binding"/>
    <property type="evidence" value="ECO:0000318"/>
    <property type="project" value="GO_Central"/>
</dbReference>
<dbReference type="GO" id="GO:0005525">
    <property type="term" value="F:GTP binding"/>
    <property type="evidence" value="ECO:0007669"/>
    <property type="project" value="UniProtKB-KW"/>
</dbReference>
<dbReference type="GO" id="GO:0003924">
    <property type="term" value="F:GTPase activity"/>
    <property type="evidence" value="ECO:0000318"/>
    <property type="project" value="GO_Central"/>
</dbReference>
<dbReference type="GO" id="GO:0046872">
    <property type="term" value="F:metal ion binding"/>
    <property type="evidence" value="ECO:0007669"/>
    <property type="project" value="UniProtKB-KW"/>
</dbReference>
<dbReference type="GO" id="GO:0031852">
    <property type="term" value="F:mu-type opioid receptor binding"/>
    <property type="evidence" value="ECO:0000318"/>
    <property type="project" value="GO_Central"/>
</dbReference>
<dbReference type="GO" id="GO:0007188">
    <property type="term" value="P:adenylate cyclase-modulating G protein-coupled receptor signaling pathway"/>
    <property type="evidence" value="ECO:0000318"/>
    <property type="project" value="GO_Central"/>
</dbReference>
<dbReference type="GO" id="GO:0007212">
    <property type="term" value="P:G protein-coupled dopamine receptor signaling pathway"/>
    <property type="evidence" value="ECO:0000318"/>
    <property type="project" value="GO_Central"/>
</dbReference>
<dbReference type="CDD" id="cd00066">
    <property type="entry name" value="G-alpha"/>
    <property type="match status" value="1"/>
</dbReference>
<dbReference type="FunFam" id="3.40.50.300:FF:003559">
    <property type="entry name" value="Guanine nucleotide-binding protein G(i) subunit alpha-1"/>
    <property type="match status" value="1"/>
</dbReference>
<dbReference type="FunFam" id="3.40.50.300:FF:002307">
    <property type="entry name" value="Guanine nucleotide-binding protein G(k) subunit alpha"/>
    <property type="match status" value="1"/>
</dbReference>
<dbReference type="FunFam" id="1.10.400.10:FF:000020">
    <property type="entry name" value="Guanine nucleotide-binding protein G(o) subunit alpha"/>
    <property type="match status" value="1"/>
</dbReference>
<dbReference type="Gene3D" id="1.10.400.10">
    <property type="entry name" value="GI Alpha 1, domain 2-like"/>
    <property type="match status" value="1"/>
</dbReference>
<dbReference type="Gene3D" id="3.40.50.300">
    <property type="entry name" value="P-loop containing nucleotide triphosphate hydrolases"/>
    <property type="match status" value="1"/>
</dbReference>
<dbReference type="InterPro" id="IPR001408">
    <property type="entry name" value="Gprotein_alpha_I"/>
</dbReference>
<dbReference type="InterPro" id="IPR001019">
    <property type="entry name" value="Gprotein_alpha_su"/>
</dbReference>
<dbReference type="InterPro" id="IPR011025">
    <property type="entry name" value="GproteinA_insert"/>
</dbReference>
<dbReference type="InterPro" id="IPR027417">
    <property type="entry name" value="P-loop_NTPase"/>
</dbReference>
<dbReference type="PANTHER" id="PTHR10218:SF363">
    <property type="entry name" value="G PROTEIN SUBUNIT ALPHA O1"/>
    <property type="match status" value="1"/>
</dbReference>
<dbReference type="PANTHER" id="PTHR10218">
    <property type="entry name" value="GTP-BINDING PROTEIN ALPHA SUBUNIT"/>
    <property type="match status" value="1"/>
</dbReference>
<dbReference type="Pfam" id="PF00503">
    <property type="entry name" value="G-alpha"/>
    <property type="match status" value="1"/>
</dbReference>
<dbReference type="PRINTS" id="PR00318">
    <property type="entry name" value="GPROTEINA"/>
</dbReference>
<dbReference type="PRINTS" id="PR00441">
    <property type="entry name" value="GPROTEINAI"/>
</dbReference>
<dbReference type="SMART" id="SM00275">
    <property type="entry name" value="G_alpha"/>
    <property type="match status" value="1"/>
</dbReference>
<dbReference type="SUPFAM" id="SSF52540">
    <property type="entry name" value="P-loop containing nucleoside triphosphate hydrolases"/>
    <property type="match status" value="1"/>
</dbReference>
<dbReference type="SUPFAM" id="SSF47895">
    <property type="entry name" value="Transducin (alpha subunit), insertion domain"/>
    <property type="match status" value="1"/>
</dbReference>
<dbReference type="PROSITE" id="PS51882">
    <property type="entry name" value="G_ALPHA"/>
    <property type="match status" value="1"/>
</dbReference>
<proteinExistence type="evidence at transcript level"/>